<comment type="function">
    <text evidence="1">Involved in the activation cascade of caspases responsible for apoptosis execution.</text>
</comment>
<comment type="subunit">
    <text evidence="1 5">Heterotetramer that consists of two anti-parallel arranged heterodimers, each one formed by two subunits (Potential). May interact with TRAF2 (By similarity).</text>
</comment>
<comment type="interaction">
    <interactant intactId="EBI-1374296">
        <id>Q920D5</id>
    </interactant>
    <interactant intactId="EBI-995350">
        <id>O95786</id>
        <label>RIGI</label>
    </interactant>
    <organismsDiffer>true</organismsDiffer>
    <experiments>4</experiments>
</comment>
<comment type="similarity">
    <text evidence="5">Belongs to the peptidase C14A family.</text>
</comment>
<name>CASPC_RAT</name>
<keyword id="KW-0053">Apoptosis</keyword>
<keyword id="KW-0378">Hydrolase</keyword>
<keyword id="KW-0597">Phosphoprotein</keyword>
<keyword id="KW-0645">Protease</keyword>
<keyword id="KW-1185">Reference proteome</keyword>
<keyword id="KW-0788">Thiol protease</keyword>
<keyword id="KW-0865">Zymogen</keyword>
<proteinExistence type="evidence at protein level"/>
<evidence type="ECO:0000250" key="1"/>
<evidence type="ECO:0000255" key="2"/>
<evidence type="ECO:0000255" key="3">
    <source>
        <dbReference type="PROSITE-ProRule" id="PRU00046"/>
    </source>
</evidence>
<evidence type="ECO:0000256" key="4">
    <source>
        <dbReference type="SAM" id="MobiDB-lite"/>
    </source>
</evidence>
<evidence type="ECO:0000305" key="5"/>
<evidence type="ECO:0007744" key="6">
    <source>
    </source>
</evidence>
<dbReference type="EC" id="3.4.22.-"/>
<dbReference type="EMBL" id="AF317633">
    <property type="protein sequence ID" value="AAL26897.1"/>
    <property type="molecule type" value="mRNA"/>
</dbReference>
<dbReference type="RefSeq" id="NP_569106.1">
    <property type="nucleotide sequence ID" value="NM_130422.2"/>
</dbReference>
<dbReference type="SMR" id="Q920D5"/>
<dbReference type="DIP" id="DIP-29839N"/>
<dbReference type="FunCoup" id="Q920D5">
    <property type="interactions" value="347"/>
</dbReference>
<dbReference type="IntAct" id="Q920D5">
    <property type="interactions" value="5"/>
</dbReference>
<dbReference type="STRING" id="10116.ENSRNOP00000071294"/>
<dbReference type="MEROPS" id="C14.013"/>
<dbReference type="iPTMnet" id="Q920D5"/>
<dbReference type="PhosphoSitePlus" id="Q920D5"/>
<dbReference type="PaxDb" id="10116-ENSRNOP00000010244"/>
<dbReference type="GeneID" id="156117"/>
<dbReference type="KEGG" id="rno:156117"/>
<dbReference type="UCSC" id="RGD:621758">
    <property type="organism name" value="rat"/>
</dbReference>
<dbReference type="AGR" id="RGD:621758"/>
<dbReference type="CTD" id="100506742"/>
<dbReference type="RGD" id="621758">
    <property type="gene designation" value="Casp12"/>
</dbReference>
<dbReference type="eggNOG" id="KOG3573">
    <property type="taxonomic scope" value="Eukaryota"/>
</dbReference>
<dbReference type="InParanoid" id="Q920D5"/>
<dbReference type="OrthoDB" id="6097640at2759"/>
<dbReference type="PhylomeDB" id="Q920D5"/>
<dbReference type="BRENDA" id="3.4.22.B66">
    <property type="organism ID" value="5301"/>
</dbReference>
<dbReference type="PRO" id="PR:Q920D5"/>
<dbReference type="Proteomes" id="UP000002494">
    <property type="component" value="Unplaced"/>
</dbReference>
<dbReference type="GO" id="GO:0005737">
    <property type="term" value="C:cytoplasm"/>
    <property type="evidence" value="ECO:0000318"/>
    <property type="project" value="GO_Central"/>
</dbReference>
<dbReference type="GO" id="GO:0005829">
    <property type="term" value="C:cytosol"/>
    <property type="evidence" value="ECO:0000318"/>
    <property type="project" value="GO_Central"/>
</dbReference>
<dbReference type="GO" id="GO:0005783">
    <property type="term" value="C:endoplasmic reticulum"/>
    <property type="evidence" value="ECO:0000266"/>
    <property type="project" value="RGD"/>
</dbReference>
<dbReference type="GO" id="GO:0072558">
    <property type="term" value="C:NLRP1 inflammasome complex"/>
    <property type="evidence" value="ECO:0000318"/>
    <property type="project" value="GO_Central"/>
</dbReference>
<dbReference type="GO" id="GO:0004197">
    <property type="term" value="F:cysteine-type endopeptidase activity"/>
    <property type="evidence" value="ECO:0000266"/>
    <property type="project" value="RGD"/>
</dbReference>
<dbReference type="GO" id="GO:0008234">
    <property type="term" value="F:cysteine-type peptidase activity"/>
    <property type="evidence" value="ECO:0000314"/>
    <property type="project" value="RGD"/>
</dbReference>
<dbReference type="GO" id="GO:0004175">
    <property type="term" value="F:endopeptidase activity"/>
    <property type="evidence" value="ECO:0000314"/>
    <property type="project" value="RGD"/>
</dbReference>
<dbReference type="GO" id="GO:0002020">
    <property type="term" value="F:protease binding"/>
    <property type="evidence" value="ECO:0000314"/>
    <property type="project" value="RGD"/>
</dbReference>
<dbReference type="GO" id="GO:0070301">
    <property type="term" value="P:cellular response to hydrogen peroxide"/>
    <property type="evidence" value="ECO:0000270"/>
    <property type="project" value="RGD"/>
</dbReference>
<dbReference type="GO" id="GO:0071287">
    <property type="term" value="P:cellular response to manganese ion"/>
    <property type="evidence" value="ECO:0000270"/>
    <property type="project" value="ParkinsonsUK-UCL"/>
</dbReference>
<dbReference type="GO" id="GO:0030968">
    <property type="term" value="P:endoplasmic reticulum unfolded protein response"/>
    <property type="evidence" value="ECO:0000266"/>
    <property type="project" value="RGD"/>
</dbReference>
<dbReference type="GO" id="GO:0044346">
    <property type="term" value="P:fibroblast apoptotic process"/>
    <property type="evidence" value="ECO:0000266"/>
    <property type="project" value="RGD"/>
</dbReference>
<dbReference type="GO" id="GO:0097193">
    <property type="term" value="P:intrinsic apoptotic signaling pathway"/>
    <property type="evidence" value="ECO:0000315"/>
    <property type="project" value="ParkinsonsUK-UCL"/>
</dbReference>
<dbReference type="GO" id="GO:0070059">
    <property type="term" value="P:intrinsic apoptotic signaling pathway in response to endoplasmic reticulum stress"/>
    <property type="evidence" value="ECO:0000266"/>
    <property type="project" value="RGD"/>
</dbReference>
<dbReference type="GO" id="GO:0001554">
    <property type="term" value="P:luteolysis"/>
    <property type="evidence" value="ECO:0000270"/>
    <property type="project" value="RGD"/>
</dbReference>
<dbReference type="GO" id="GO:0050729">
    <property type="term" value="P:positive regulation of inflammatory response"/>
    <property type="evidence" value="ECO:0000318"/>
    <property type="project" value="GO_Central"/>
</dbReference>
<dbReference type="GO" id="GO:0043525">
    <property type="term" value="P:positive regulation of neuron apoptotic process"/>
    <property type="evidence" value="ECO:0000318"/>
    <property type="project" value="GO_Central"/>
</dbReference>
<dbReference type="GO" id="GO:0010663">
    <property type="term" value="P:positive regulation of striated muscle cell apoptotic process"/>
    <property type="evidence" value="ECO:0000315"/>
    <property type="project" value="RGD"/>
</dbReference>
<dbReference type="GO" id="GO:0016540">
    <property type="term" value="P:protein autoprocessing"/>
    <property type="evidence" value="ECO:0000314"/>
    <property type="project" value="RGD"/>
</dbReference>
<dbReference type="GO" id="GO:0030163">
    <property type="term" value="P:protein catabolic process"/>
    <property type="evidence" value="ECO:0000314"/>
    <property type="project" value="RGD"/>
</dbReference>
<dbReference type="GO" id="GO:0034059">
    <property type="term" value="P:response to anoxia"/>
    <property type="evidence" value="ECO:0000270"/>
    <property type="project" value="RGD"/>
</dbReference>
<dbReference type="GO" id="GO:0034976">
    <property type="term" value="P:response to endoplasmic reticulum stress"/>
    <property type="evidence" value="ECO:0000270"/>
    <property type="project" value="RGD"/>
</dbReference>
<dbReference type="GO" id="GO:0045471">
    <property type="term" value="P:response to ethanol"/>
    <property type="evidence" value="ECO:0000270"/>
    <property type="project" value="RGD"/>
</dbReference>
<dbReference type="GO" id="GO:0010041">
    <property type="term" value="P:response to iron(III) ion"/>
    <property type="evidence" value="ECO:0000270"/>
    <property type="project" value="RGD"/>
</dbReference>
<dbReference type="GO" id="GO:1904373">
    <property type="term" value="P:response to kainic acid"/>
    <property type="evidence" value="ECO:0000270"/>
    <property type="project" value="RGD"/>
</dbReference>
<dbReference type="GO" id="GO:0035094">
    <property type="term" value="P:response to nicotine"/>
    <property type="evidence" value="ECO:0000270"/>
    <property type="project" value="RGD"/>
</dbReference>
<dbReference type="GO" id="GO:0009410">
    <property type="term" value="P:response to xenobiotic stimulus"/>
    <property type="evidence" value="ECO:0000270"/>
    <property type="project" value="RGD"/>
</dbReference>
<dbReference type="GO" id="GO:0097264">
    <property type="term" value="P:self proteolysis"/>
    <property type="evidence" value="ECO:0000266"/>
    <property type="project" value="RGD"/>
</dbReference>
<dbReference type="CDD" id="cd08325">
    <property type="entry name" value="CARD_CASP1-like"/>
    <property type="match status" value="1"/>
</dbReference>
<dbReference type="CDD" id="cd00032">
    <property type="entry name" value="CASc"/>
    <property type="match status" value="1"/>
</dbReference>
<dbReference type="FunFam" id="3.30.70.1470:FF:000003">
    <property type="entry name" value="Caspase-1"/>
    <property type="match status" value="1"/>
</dbReference>
<dbReference type="FunFam" id="3.40.50.1460:FF:000007">
    <property type="entry name" value="Caspase-1"/>
    <property type="match status" value="1"/>
</dbReference>
<dbReference type="FunFam" id="1.10.533.10:FF:000073">
    <property type="entry name" value="Inactive caspase-12"/>
    <property type="match status" value="1"/>
</dbReference>
<dbReference type="Gene3D" id="3.40.50.1460">
    <property type="match status" value="1"/>
</dbReference>
<dbReference type="Gene3D" id="3.30.70.1470">
    <property type="entry name" value="Caspase-like"/>
    <property type="match status" value="1"/>
</dbReference>
<dbReference type="Gene3D" id="1.10.533.10">
    <property type="entry name" value="Death Domain, Fas"/>
    <property type="match status" value="1"/>
</dbReference>
<dbReference type="InterPro" id="IPR001315">
    <property type="entry name" value="CARD"/>
</dbReference>
<dbReference type="InterPro" id="IPR029030">
    <property type="entry name" value="Caspase-like_dom_sf"/>
</dbReference>
<dbReference type="InterPro" id="IPR033139">
    <property type="entry name" value="Caspase_cys_AS"/>
</dbReference>
<dbReference type="InterPro" id="IPR016129">
    <property type="entry name" value="Caspase_his_AS"/>
</dbReference>
<dbReference type="InterPro" id="IPR011029">
    <property type="entry name" value="DEATH-like_dom_sf"/>
</dbReference>
<dbReference type="InterPro" id="IPR002398">
    <property type="entry name" value="Pept_C14"/>
</dbReference>
<dbReference type="InterPro" id="IPR011600">
    <property type="entry name" value="Pept_C14_caspase"/>
</dbReference>
<dbReference type="InterPro" id="IPR002138">
    <property type="entry name" value="Pept_C14_p10"/>
</dbReference>
<dbReference type="InterPro" id="IPR001309">
    <property type="entry name" value="Pept_C14_p20"/>
</dbReference>
<dbReference type="InterPro" id="IPR015917">
    <property type="entry name" value="Pept_C14A"/>
</dbReference>
<dbReference type="PANTHER" id="PTHR47901">
    <property type="entry name" value="CASPASE RECRUITMENT DOMAIN-CONTAINING PROTEIN 18"/>
    <property type="match status" value="1"/>
</dbReference>
<dbReference type="PANTHER" id="PTHR47901:SF6">
    <property type="entry name" value="CASPASE-12"/>
    <property type="match status" value="1"/>
</dbReference>
<dbReference type="Pfam" id="PF00619">
    <property type="entry name" value="CARD"/>
    <property type="match status" value="1"/>
</dbReference>
<dbReference type="Pfam" id="PF00656">
    <property type="entry name" value="Peptidase_C14"/>
    <property type="match status" value="1"/>
</dbReference>
<dbReference type="PIRSF" id="PIRSF038001">
    <property type="entry name" value="Caspase_ICE"/>
    <property type="match status" value="1"/>
</dbReference>
<dbReference type="PRINTS" id="PR00376">
    <property type="entry name" value="IL1BCENZYME"/>
</dbReference>
<dbReference type="SMART" id="SM00115">
    <property type="entry name" value="CASc"/>
    <property type="match status" value="1"/>
</dbReference>
<dbReference type="SUPFAM" id="SSF52129">
    <property type="entry name" value="Caspase-like"/>
    <property type="match status" value="1"/>
</dbReference>
<dbReference type="SUPFAM" id="SSF47986">
    <property type="entry name" value="DEATH domain"/>
    <property type="match status" value="1"/>
</dbReference>
<dbReference type="PROSITE" id="PS50209">
    <property type="entry name" value="CARD"/>
    <property type="match status" value="1"/>
</dbReference>
<dbReference type="PROSITE" id="PS01122">
    <property type="entry name" value="CASPASE_CYS"/>
    <property type="match status" value="1"/>
</dbReference>
<dbReference type="PROSITE" id="PS01121">
    <property type="entry name" value="CASPASE_HIS"/>
    <property type="match status" value="1"/>
</dbReference>
<dbReference type="PROSITE" id="PS50207">
    <property type="entry name" value="CASPASE_P10"/>
    <property type="match status" value="1"/>
</dbReference>
<dbReference type="PROSITE" id="PS50208">
    <property type="entry name" value="CASPASE_P20"/>
    <property type="match status" value="1"/>
</dbReference>
<feature type="propeptide" id="PRO_0000317444" evidence="2">
    <location>
        <begin position="1"/>
        <end status="unknown"/>
    </location>
</feature>
<feature type="chain" id="PRO_0000317445" description="Caspase-12">
    <location>
        <begin status="unknown"/>
        <end position="420"/>
    </location>
</feature>
<feature type="domain" description="CARD" evidence="3">
    <location>
        <begin position="1"/>
        <end position="92"/>
    </location>
</feature>
<feature type="region of interest" description="Disordered" evidence="4">
    <location>
        <begin position="93"/>
        <end position="115"/>
    </location>
</feature>
<feature type="active site" evidence="1">
    <location>
        <position position="251"/>
    </location>
</feature>
<feature type="active site" evidence="1">
    <location>
        <position position="299"/>
    </location>
</feature>
<feature type="modified residue" description="Phosphoserine" evidence="6">
    <location>
        <position position="85"/>
    </location>
</feature>
<feature type="modified residue" description="Phosphoserine" evidence="6">
    <location>
        <position position="90"/>
    </location>
</feature>
<sequence length="420" mass="47837">MAAKRTHERDPIYKIKGLAKDMLDGVFDDLMDKNVLNGDELLKIGEGASLILSKAENLVESFFEKTEMAGKIFAGHIANSDKQLSLQFPSDDEEDELQKMFTPSSASESRGKVEDEEMEVNVGVAHASHLMLTVPQGIQSTEVQDSLKLCSRDWFCTMKTERAEEIYPVMEKEGRTRLALIICNKKFDYLFDRDDAETDILNMKELLQNLGYSVVIKENLTAQEMETELMKFAGRPEHQSSDSTFLVFMSHGILEGICGVKHRNKKPDVLHDDTIFTIFNNSNCPSLRNKPKILIMQACRGRHTGTIWVSTSKGIATADTDEECVLSHRWNNSITKAHVETDFIAFKSSTPHNISWKVGKSGSLFISKLIDCFKKYCWCYHLEEIFRKVQYSFEVPGELTQMPTIERVSMTRYFYLFPGN</sequence>
<organism>
    <name type="scientific">Rattus norvegicus</name>
    <name type="common">Rat</name>
    <dbReference type="NCBI Taxonomy" id="10116"/>
    <lineage>
        <taxon>Eukaryota</taxon>
        <taxon>Metazoa</taxon>
        <taxon>Chordata</taxon>
        <taxon>Craniata</taxon>
        <taxon>Vertebrata</taxon>
        <taxon>Euteleostomi</taxon>
        <taxon>Mammalia</taxon>
        <taxon>Eutheria</taxon>
        <taxon>Euarchontoglires</taxon>
        <taxon>Glires</taxon>
        <taxon>Rodentia</taxon>
        <taxon>Myomorpha</taxon>
        <taxon>Muroidea</taxon>
        <taxon>Muridae</taxon>
        <taxon>Murinae</taxon>
        <taxon>Rattus</taxon>
    </lineage>
</organism>
<protein>
    <recommendedName>
        <fullName>Caspase-12</fullName>
        <shortName>CASP-12</shortName>
        <ecNumber>3.4.22.-</ecNumber>
    </recommendedName>
</protein>
<accession>Q920D5</accession>
<reference key="1">
    <citation type="submission" date="2000-10" db="EMBL/GenBank/DDBJ databases">
        <title>Cloning of rat caspase-12 mRNA.</title>
        <authorList>
            <person name="Loisel T.P."/>
            <person name="Vaillancourt J."/>
            <person name="Roy S."/>
            <person name="Nicholson D.W."/>
        </authorList>
    </citation>
    <scope>NUCLEOTIDE SEQUENCE [MRNA]</scope>
</reference>
<reference key="2">
    <citation type="journal article" date="2012" name="Nat. Commun.">
        <title>Quantitative maps of protein phosphorylation sites across 14 different rat organs and tissues.</title>
        <authorList>
            <person name="Lundby A."/>
            <person name="Secher A."/>
            <person name="Lage K."/>
            <person name="Nordsborg N.B."/>
            <person name="Dmytriyev A."/>
            <person name="Lundby C."/>
            <person name="Olsen J.V."/>
        </authorList>
    </citation>
    <scope>PHOSPHORYLATION [LARGE SCALE ANALYSIS] AT SER-85 AND SER-90</scope>
    <scope>IDENTIFICATION BY MASS SPECTROMETRY [LARGE SCALE ANALYSIS]</scope>
</reference>
<gene>
    <name type="primary">Casp12</name>
</gene>